<organism>
    <name type="scientific">Leptospira interrogans serogroup Icterohaemorrhagiae serovar Lai (strain 56601)</name>
    <dbReference type="NCBI Taxonomy" id="189518"/>
    <lineage>
        <taxon>Bacteria</taxon>
        <taxon>Pseudomonadati</taxon>
        <taxon>Spirochaetota</taxon>
        <taxon>Spirochaetia</taxon>
        <taxon>Leptospirales</taxon>
        <taxon>Leptospiraceae</taxon>
        <taxon>Leptospira</taxon>
    </lineage>
</organism>
<accession>Q8F2J2</accession>
<sequence length="503" mass="55013">MKIKTDEITSVLKQEILNYKKDLGVEEVGTVLEIGDGIARVFGLKNVMSGEMVEFQNGIFGQAFNLEDNSVGVVVYGNYLDIQEGFSVKRTNRILEVPVGPELLGRVVNPLGEPIDGKGPINAKLTRPVESPAPGIAMRQPVGEPMQTGIKAIDAMIPIGRGQRELIIGDRGTGKTSIALDTILNQKGTGVICVYVAIGQKASTVASTVEMLRNKGALEYTIVVSATAADPAPLQYIAPYSGCSMAEYFMYNEKKATLVVYDDLSKQAVAYRQMSLLLRRPPGREAYPGDVFYLHSRLLERAAKLDDKYGAGSLTALPIIETQEGEVSAYIPTNVISITDGQIYLQSNLFASGNRPAVDVGISVSRVGSAAQIKAMKQVAGKMKLELAQFRDLEAFAQLGTELDPATQAQLDRGNRIVQMLKQPVSSPYPVEEQVVEIFAVTRGFMDKIPVAKVQEYGKYLLNTIKEQYSEVLDSIRKEKKISDEEKLGEVLSKVAEEFLRKH</sequence>
<gene>
    <name evidence="1" type="primary">atpA</name>
    <name type="ordered locus">LA_2779</name>
</gene>
<protein>
    <recommendedName>
        <fullName evidence="1">ATP synthase subunit alpha</fullName>
        <ecNumber evidence="1">7.1.2.2</ecNumber>
    </recommendedName>
    <alternativeName>
        <fullName evidence="1">ATP synthase F1 sector subunit alpha</fullName>
    </alternativeName>
    <alternativeName>
        <fullName evidence="1">F-ATPase subunit alpha</fullName>
    </alternativeName>
</protein>
<proteinExistence type="inferred from homology"/>
<evidence type="ECO:0000255" key="1">
    <source>
        <dbReference type="HAMAP-Rule" id="MF_01346"/>
    </source>
</evidence>
<keyword id="KW-0066">ATP synthesis</keyword>
<keyword id="KW-0067">ATP-binding</keyword>
<keyword id="KW-0997">Cell inner membrane</keyword>
<keyword id="KW-1003">Cell membrane</keyword>
<keyword id="KW-0139">CF(1)</keyword>
<keyword id="KW-0375">Hydrogen ion transport</keyword>
<keyword id="KW-0406">Ion transport</keyword>
<keyword id="KW-0472">Membrane</keyword>
<keyword id="KW-0547">Nucleotide-binding</keyword>
<keyword id="KW-1185">Reference proteome</keyword>
<keyword id="KW-1278">Translocase</keyword>
<keyword id="KW-0813">Transport</keyword>
<name>ATPA_LEPIN</name>
<reference key="1">
    <citation type="journal article" date="2003" name="Nature">
        <title>Unique physiological and pathogenic features of Leptospira interrogans revealed by whole-genome sequencing.</title>
        <authorList>
            <person name="Ren S.-X."/>
            <person name="Fu G."/>
            <person name="Jiang X.-G."/>
            <person name="Zeng R."/>
            <person name="Miao Y.-G."/>
            <person name="Xu H."/>
            <person name="Zhang Y.-X."/>
            <person name="Xiong H."/>
            <person name="Lu G."/>
            <person name="Lu L.-F."/>
            <person name="Jiang H.-Q."/>
            <person name="Jia J."/>
            <person name="Tu Y.-F."/>
            <person name="Jiang J.-X."/>
            <person name="Gu W.-Y."/>
            <person name="Zhang Y.-Q."/>
            <person name="Cai Z."/>
            <person name="Sheng H.-H."/>
            <person name="Yin H.-F."/>
            <person name="Zhang Y."/>
            <person name="Zhu G.-F."/>
            <person name="Wan M."/>
            <person name="Huang H.-L."/>
            <person name="Qian Z."/>
            <person name="Wang S.-Y."/>
            <person name="Ma W."/>
            <person name="Yao Z.-J."/>
            <person name="Shen Y."/>
            <person name="Qiang B.-Q."/>
            <person name="Xia Q.-C."/>
            <person name="Guo X.-K."/>
            <person name="Danchin A."/>
            <person name="Saint Girons I."/>
            <person name="Somerville R.L."/>
            <person name="Wen Y.-M."/>
            <person name="Shi M.-H."/>
            <person name="Chen Z."/>
            <person name="Xu J.-G."/>
            <person name="Zhao G.-P."/>
        </authorList>
    </citation>
    <scope>NUCLEOTIDE SEQUENCE [LARGE SCALE GENOMIC DNA]</scope>
    <source>
        <strain>56601</strain>
    </source>
</reference>
<feature type="chain" id="PRO_0000238275" description="ATP synthase subunit alpha">
    <location>
        <begin position="1"/>
        <end position="503"/>
    </location>
</feature>
<feature type="binding site" evidence="1">
    <location>
        <begin position="169"/>
        <end position="176"/>
    </location>
    <ligand>
        <name>ATP</name>
        <dbReference type="ChEBI" id="CHEBI:30616"/>
    </ligand>
</feature>
<feature type="site" description="Required for activity" evidence="1">
    <location>
        <position position="363"/>
    </location>
</feature>
<dbReference type="EC" id="7.1.2.2" evidence="1"/>
<dbReference type="EMBL" id="AE010300">
    <property type="protein sequence ID" value="AAN49978.2"/>
    <property type="molecule type" value="Genomic_DNA"/>
</dbReference>
<dbReference type="RefSeq" id="NP_712960.2">
    <property type="nucleotide sequence ID" value="NC_004342.2"/>
</dbReference>
<dbReference type="RefSeq" id="WP_000695329.1">
    <property type="nucleotide sequence ID" value="NC_004342.2"/>
</dbReference>
<dbReference type="SMR" id="Q8F2J2"/>
<dbReference type="FunCoup" id="Q8F2J2">
    <property type="interactions" value="358"/>
</dbReference>
<dbReference type="STRING" id="189518.LA_2779"/>
<dbReference type="PaxDb" id="189518-LA_2779"/>
<dbReference type="EnsemblBacteria" id="AAN49978">
    <property type="protein sequence ID" value="AAN49978"/>
    <property type="gene ID" value="LA_2779"/>
</dbReference>
<dbReference type="GeneID" id="61144558"/>
<dbReference type="KEGG" id="lil:LA_2779"/>
<dbReference type="PATRIC" id="fig|189518.3.peg.2760"/>
<dbReference type="HOGENOM" id="CLU_010091_2_1_12"/>
<dbReference type="InParanoid" id="Q8F2J2"/>
<dbReference type="OrthoDB" id="9803053at2"/>
<dbReference type="Proteomes" id="UP000001408">
    <property type="component" value="Chromosome I"/>
</dbReference>
<dbReference type="GO" id="GO:0005886">
    <property type="term" value="C:plasma membrane"/>
    <property type="evidence" value="ECO:0007669"/>
    <property type="project" value="UniProtKB-SubCell"/>
</dbReference>
<dbReference type="GO" id="GO:0045259">
    <property type="term" value="C:proton-transporting ATP synthase complex"/>
    <property type="evidence" value="ECO:0007669"/>
    <property type="project" value="UniProtKB-KW"/>
</dbReference>
<dbReference type="GO" id="GO:0043531">
    <property type="term" value="F:ADP binding"/>
    <property type="evidence" value="ECO:0000318"/>
    <property type="project" value="GO_Central"/>
</dbReference>
<dbReference type="GO" id="GO:0005524">
    <property type="term" value="F:ATP binding"/>
    <property type="evidence" value="ECO:0000318"/>
    <property type="project" value="GO_Central"/>
</dbReference>
<dbReference type="GO" id="GO:0046933">
    <property type="term" value="F:proton-transporting ATP synthase activity, rotational mechanism"/>
    <property type="evidence" value="ECO:0007669"/>
    <property type="project" value="UniProtKB-UniRule"/>
</dbReference>
<dbReference type="GO" id="GO:0015986">
    <property type="term" value="P:proton motive force-driven ATP synthesis"/>
    <property type="evidence" value="ECO:0000318"/>
    <property type="project" value="GO_Central"/>
</dbReference>
<dbReference type="CDD" id="cd18113">
    <property type="entry name" value="ATP-synt_F1_alpha_C"/>
    <property type="match status" value="1"/>
</dbReference>
<dbReference type="CDD" id="cd18116">
    <property type="entry name" value="ATP-synt_F1_alpha_N"/>
    <property type="match status" value="1"/>
</dbReference>
<dbReference type="CDD" id="cd01132">
    <property type="entry name" value="F1-ATPase_alpha_CD"/>
    <property type="match status" value="1"/>
</dbReference>
<dbReference type="FunFam" id="1.20.150.20:FF:000001">
    <property type="entry name" value="ATP synthase subunit alpha"/>
    <property type="match status" value="1"/>
</dbReference>
<dbReference type="FunFam" id="2.40.30.20:FF:000001">
    <property type="entry name" value="ATP synthase subunit alpha"/>
    <property type="match status" value="1"/>
</dbReference>
<dbReference type="FunFam" id="3.40.50.300:FF:000002">
    <property type="entry name" value="ATP synthase subunit alpha"/>
    <property type="match status" value="1"/>
</dbReference>
<dbReference type="Gene3D" id="2.40.30.20">
    <property type="match status" value="1"/>
</dbReference>
<dbReference type="Gene3D" id="1.20.150.20">
    <property type="entry name" value="ATP synthase alpha/beta chain, C-terminal domain"/>
    <property type="match status" value="1"/>
</dbReference>
<dbReference type="Gene3D" id="3.40.50.300">
    <property type="entry name" value="P-loop containing nucleotide triphosphate hydrolases"/>
    <property type="match status" value="1"/>
</dbReference>
<dbReference type="HAMAP" id="MF_01346">
    <property type="entry name" value="ATP_synth_alpha_bact"/>
    <property type="match status" value="1"/>
</dbReference>
<dbReference type="InterPro" id="IPR023366">
    <property type="entry name" value="ATP_synth_asu-like_sf"/>
</dbReference>
<dbReference type="InterPro" id="IPR000793">
    <property type="entry name" value="ATP_synth_asu_C"/>
</dbReference>
<dbReference type="InterPro" id="IPR038376">
    <property type="entry name" value="ATP_synth_asu_C_sf"/>
</dbReference>
<dbReference type="InterPro" id="IPR033732">
    <property type="entry name" value="ATP_synth_F1_a_nt-bd_dom"/>
</dbReference>
<dbReference type="InterPro" id="IPR005294">
    <property type="entry name" value="ATP_synth_F1_asu"/>
</dbReference>
<dbReference type="InterPro" id="IPR020003">
    <property type="entry name" value="ATPase_a/bsu_AS"/>
</dbReference>
<dbReference type="InterPro" id="IPR004100">
    <property type="entry name" value="ATPase_F1/V1/A1_a/bsu_N"/>
</dbReference>
<dbReference type="InterPro" id="IPR036121">
    <property type="entry name" value="ATPase_F1/V1/A1_a/bsu_N_sf"/>
</dbReference>
<dbReference type="InterPro" id="IPR000194">
    <property type="entry name" value="ATPase_F1/V1/A1_a/bsu_nucl-bd"/>
</dbReference>
<dbReference type="InterPro" id="IPR027417">
    <property type="entry name" value="P-loop_NTPase"/>
</dbReference>
<dbReference type="NCBIfam" id="TIGR00962">
    <property type="entry name" value="atpA"/>
    <property type="match status" value="1"/>
</dbReference>
<dbReference type="NCBIfam" id="NF009884">
    <property type="entry name" value="PRK13343.1"/>
    <property type="match status" value="1"/>
</dbReference>
<dbReference type="PANTHER" id="PTHR48082">
    <property type="entry name" value="ATP SYNTHASE SUBUNIT ALPHA, MITOCHONDRIAL"/>
    <property type="match status" value="1"/>
</dbReference>
<dbReference type="PANTHER" id="PTHR48082:SF2">
    <property type="entry name" value="ATP SYNTHASE SUBUNIT ALPHA, MITOCHONDRIAL"/>
    <property type="match status" value="1"/>
</dbReference>
<dbReference type="Pfam" id="PF00006">
    <property type="entry name" value="ATP-synt_ab"/>
    <property type="match status" value="1"/>
</dbReference>
<dbReference type="Pfam" id="PF00306">
    <property type="entry name" value="ATP-synt_ab_C"/>
    <property type="match status" value="1"/>
</dbReference>
<dbReference type="Pfam" id="PF02874">
    <property type="entry name" value="ATP-synt_ab_N"/>
    <property type="match status" value="1"/>
</dbReference>
<dbReference type="PIRSF" id="PIRSF039088">
    <property type="entry name" value="F_ATPase_subunit_alpha"/>
    <property type="match status" value="1"/>
</dbReference>
<dbReference type="SUPFAM" id="SSF47917">
    <property type="entry name" value="C-terminal domain of alpha and beta subunits of F1 ATP synthase"/>
    <property type="match status" value="1"/>
</dbReference>
<dbReference type="SUPFAM" id="SSF50615">
    <property type="entry name" value="N-terminal domain of alpha and beta subunits of F1 ATP synthase"/>
    <property type="match status" value="1"/>
</dbReference>
<dbReference type="SUPFAM" id="SSF52540">
    <property type="entry name" value="P-loop containing nucleoside triphosphate hydrolases"/>
    <property type="match status" value="1"/>
</dbReference>
<dbReference type="PROSITE" id="PS00152">
    <property type="entry name" value="ATPASE_ALPHA_BETA"/>
    <property type="match status" value="1"/>
</dbReference>
<comment type="function">
    <text evidence="1">Produces ATP from ADP in the presence of a proton gradient across the membrane. The alpha chain is a regulatory subunit.</text>
</comment>
<comment type="catalytic activity">
    <reaction evidence="1">
        <text>ATP + H2O + 4 H(+)(in) = ADP + phosphate + 5 H(+)(out)</text>
        <dbReference type="Rhea" id="RHEA:57720"/>
        <dbReference type="ChEBI" id="CHEBI:15377"/>
        <dbReference type="ChEBI" id="CHEBI:15378"/>
        <dbReference type="ChEBI" id="CHEBI:30616"/>
        <dbReference type="ChEBI" id="CHEBI:43474"/>
        <dbReference type="ChEBI" id="CHEBI:456216"/>
        <dbReference type="EC" id="7.1.2.2"/>
    </reaction>
</comment>
<comment type="subunit">
    <text evidence="1">F-type ATPases have 2 components, CF(1) - the catalytic core - and CF(0) - the membrane proton channel. CF(1) has five subunits: alpha(3), beta(3), gamma(1), delta(1), epsilon(1). CF(0) has three main subunits: a(1), b(2) and c(9-12). The alpha and beta chains form an alternating ring which encloses part of the gamma chain. CF(1) is attached to CF(0) by a central stalk formed by the gamma and epsilon chains, while a peripheral stalk is formed by the delta and b chains.</text>
</comment>
<comment type="subcellular location">
    <subcellularLocation>
        <location evidence="1">Cell inner membrane</location>
        <topology evidence="1">Peripheral membrane protein</topology>
    </subcellularLocation>
</comment>
<comment type="similarity">
    <text evidence="1">Belongs to the ATPase alpha/beta chains family.</text>
</comment>